<feature type="transit peptide" description="Mitochondrion" evidence="1">
    <location>
        <begin position="1"/>
        <end position="27"/>
    </location>
</feature>
<feature type="chain" id="PRO_0000363505" description="Putative pentatricopeptide repeat-containing protein At5g08310, mitochondrial">
    <location>
        <begin position="28"/>
        <end position="832"/>
    </location>
</feature>
<feature type="repeat" description="PPR 1">
    <location>
        <begin position="105"/>
        <end position="139"/>
    </location>
</feature>
<feature type="repeat" description="PPR 2">
    <location>
        <begin position="140"/>
        <end position="174"/>
    </location>
</feature>
<feature type="repeat" description="PPR 3">
    <location>
        <begin position="176"/>
        <end position="212"/>
    </location>
</feature>
<feature type="repeat" description="PPR 4">
    <location>
        <begin position="213"/>
        <end position="247"/>
    </location>
</feature>
<feature type="repeat" description="PPR 5">
    <location>
        <begin position="252"/>
        <end position="281"/>
    </location>
</feature>
<feature type="repeat" description="PPR 6">
    <location>
        <begin position="282"/>
        <end position="316"/>
    </location>
</feature>
<feature type="repeat" description="PPR 7">
    <location>
        <begin position="317"/>
        <end position="351"/>
    </location>
</feature>
<feature type="repeat" description="PPR 8">
    <location>
        <begin position="352"/>
        <end position="383"/>
    </location>
</feature>
<feature type="repeat" description="PPR 9">
    <location>
        <begin position="385"/>
        <end position="415"/>
    </location>
</feature>
<feature type="repeat" description="PPR 10">
    <location>
        <begin position="438"/>
        <end position="472"/>
    </location>
</feature>
<feature type="repeat" description="PPR 11">
    <location>
        <begin position="473"/>
        <end position="507"/>
    </location>
</feature>
<feature type="repeat" description="PPR 12">
    <location>
        <begin position="508"/>
        <end position="542"/>
    </location>
</feature>
<feature type="repeat" description="PPR 13">
    <location>
        <begin position="543"/>
        <end position="577"/>
    </location>
</feature>
<feature type="repeat" description="PPR 14">
    <location>
        <begin position="578"/>
        <end position="612"/>
    </location>
</feature>
<feature type="repeat" description="PPR 15">
    <location>
        <begin position="613"/>
        <end position="647"/>
    </location>
</feature>
<feature type="repeat" description="PPR 16">
    <location>
        <begin position="648"/>
        <end position="682"/>
    </location>
</feature>
<feature type="repeat" description="PPR 17">
    <location>
        <begin position="683"/>
        <end position="717"/>
    </location>
</feature>
<feature type="repeat" description="PPR 18">
    <location>
        <begin position="718"/>
        <end position="752"/>
    </location>
</feature>
<feature type="repeat" description="PPR 19">
    <location>
        <begin position="753"/>
        <end position="787"/>
    </location>
</feature>
<organism>
    <name type="scientific">Arabidopsis thaliana</name>
    <name type="common">Mouse-ear cress</name>
    <dbReference type="NCBI Taxonomy" id="3702"/>
    <lineage>
        <taxon>Eukaryota</taxon>
        <taxon>Viridiplantae</taxon>
        <taxon>Streptophyta</taxon>
        <taxon>Embryophyta</taxon>
        <taxon>Tracheophyta</taxon>
        <taxon>Spermatophyta</taxon>
        <taxon>Magnoliopsida</taxon>
        <taxon>eudicotyledons</taxon>
        <taxon>Gunneridae</taxon>
        <taxon>Pentapetalae</taxon>
        <taxon>rosids</taxon>
        <taxon>malvids</taxon>
        <taxon>Brassicales</taxon>
        <taxon>Brassicaceae</taxon>
        <taxon>Camelineae</taxon>
        <taxon>Arabidopsis</taxon>
    </lineage>
</organism>
<sequence length="832" mass="94071">MAFSRIALLCQRFSRQQQQRQLLHRPLTTKLDNTRFLHPNQSKLAQNLIVIFTRQPFSPDDPELLILSPELNTKVVETVLNGFKRWGLAYLFFNWASKQEGYRNDMYAYNAMASILSRARQNASLKALVVDVLNSRCFMSPGAFGFFIRCLGNAGLVDEASSVFDRVREMGLCVPNAYTYNCLLEAISKSNSSSVELVEARLKEMRDCGFHFDKFTLTPVLQVYCNTGKSERALSVFNEILSRGWLDEHISTILVVSFCKWGQVDKAFELIEMLEERDIRLNYKTYCVLIHGFVKESRIDKAFQLFEKMRRMGMNADIALYDVLIGGLCKHKDLEMALSLYLEIKRSGIPPDRGILGKLLCSFSEESELSRITEVIIGDIDKKSVMLLYKSLFEGFIRNDLVHEAYSFIQNLMGNYESDGVSEIVKLLKDHNKAILPDSDSLSIVINCLVKANKVDMAVTLLHDIVQNGLIPGPMMYNNIIEGMCKEGRSEESLKLLGEMKDAGVEPSQFTLNCIYGCLAERCDFVGALDLLKKMRFYGFEPWIKHTTFLVKKLCENGRAVDACKYLDDVAGEGFLGHMVASTAAIDGLIKNEGVDRGLELFRDICANGHCPDVIAYHVLIKALCKACRTMEADILFNEMVSKGLKPTVATYNSMIDGWCKEGEIDRGLSCIVRMYEDEKNPDVITYTSLIHGLCASGRPSEAIFRWNEMKGKDCYPNRITFMALIQGLCKCGWSGEALVYFREMEEKEMEPDSAVYLSLVSSFLSSENINAGFGIFREMVHKGRFPVSVDRNYMLAVNVTSKFVEDLRTSCYLTCLIKDGRIPILAVVSRI</sequence>
<comment type="subcellular location">
    <subcellularLocation>
        <location evidence="2">Mitochondrion</location>
    </subcellularLocation>
</comment>
<comment type="similarity">
    <text evidence="2">Belongs to the PPR family. P subfamily.</text>
</comment>
<comment type="sequence caution" evidence="2">
    <conflict type="erroneous gene model prediction">
        <sequence resource="EMBL-CDS" id="CAC08331"/>
    </conflict>
    <text>The predicted gene has been split into 2 genes: At5g08305 and At5g08310.</text>
</comment>
<comment type="online information" name="Pentatricopeptide repeat proteins">
    <link uri="https://ppr.plantenergy.uwa.edu.au"/>
</comment>
<proteinExistence type="inferred from homology"/>
<dbReference type="EMBL" id="AL392174">
    <property type="protein sequence ID" value="CAC08331.1"/>
    <property type="status" value="ALT_SEQ"/>
    <property type="molecule type" value="Genomic_DNA"/>
</dbReference>
<dbReference type="EMBL" id="CP002688">
    <property type="protein sequence ID" value="AED91281.1"/>
    <property type="molecule type" value="Genomic_DNA"/>
</dbReference>
<dbReference type="EMBL" id="CP002688">
    <property type="protein sequence ID" value="ANM68528.1"/>
    <property type="molecule type" value="Genomic_DNA"/>
</dbReference>
<dbReference type="RefSeq" id="NP_001318509.1">
    <property type="nucleotide sequence ID" value="NM_001342994.1"/>
</dbReference>
<dbReference type="RefSeq" id="NP_196448.2">
    <property type="nucleotide sequence ID" value="NM_120914.2"/>
</dbReference>
<dbReference type="SMR" id="P0C8Q6"/>
<dbReference type="FunCoup" id="P0C8Q6">
    <property type="interactions" value="476"/>
</dbReference>
<dbReference type="STRING" id="3702.P0C8Q6"/>
<dbReference type="iPTMnet" id="P0C8Q6"/>
<dbReference type="PaxDb" id="3702-AT5G08310.1"/>
<dbReference type="ProteomicsDB" id="249258"/>
<dbReference type="EnsemblPlants" id="AT5G08310.1">
    <property type="protein sequence ID" value="AT5G08310.1"/>
    <property type="gene ID" value="AT5G08310"/>
</dbReference>
<dbReference type="EnsemblPlants" id="AT5G08310.2">
    <property type="protein sequence ID" value="AT5G08310.2"/>
    <property type="gene ID" value="AT5G08310"/>
</dbReference>
<dbReference type="GeneID" id="830727"/>
<dbReference type="Gramene" id="AT5G08310.1">
    <property type="protein sequence ID" value="AT5G08310.1"/>
    <property type="gene ID" value="AT5G08310"/>
</dbReference>
<dbReference type="Gramene" id="AT5G08310.2">
    <property type="protein sequence ID" value="AT5G08310.2"/>
    <property type="gene ID" value="AT5G08310"/>
</dbReference>
<dbReference type="KEGG" id="ath:AT5G08310"/>
<dbReference type="Araport" id="AT5G08310"/>
<dbReference type="TAIR" id="AT5G08310"/>
<dbReference type="eggNOG" id="KOG4197">
    <property type="taxonomic scope" value="Eukaryota"/>
</dbReference>
<dbReference type="HOGENOM" id="CLU_002706_49_1_1"/>
<dbReference type="InParanoid" id="P0C8Q6"/>
<dbReference type="OMA" id="LCVPNSY"/>
<dbReference type="OrthoDB" id="185373at2759"/>
<dbReference type="PhylomeDB" id="P0C8Q6"/>
<dbReference type="PRO" id="PR:P0C8Q6"/>
<dbReference type="Proteomes" id="UP000006548">
    <property type="component" value="Chromosome 5"/>
</dbReference>
<dbReference type="ExpressionAtlas" id="P0C8Q6">
    <property type="expression patterns" value="baseline and differential"/>
</dbReference>
<dbReference type="GO" id="GO:0005739">
    <property type="term" value="C:mitochondrion"/>
    <property type="evidence" value="ECO:0007669"/>
    <property type="project" value="UniProtKB-SubCell"/>
</dbReference>
<dbReference type="Gene3D" id="1.25.40.10">
    <property type="entry name" value="Tetratricopeptide repeat domain"/>
    <property type="match status" value="6"/>
</dbReference>
<dbReference type="InterPro" id="IPR002885">
    <property type="entry name" value="Pentatricopeptide_rpt"/>
</dbReference>
<dbReference type="InterPro" id="IPR011990">
    <property type="entry name" value="TPR-like_helical_dom_sf"/>
</dbReference>
<dbReference type="NCBIfam" id="TIGR00756">
    <property type="entry name" value="PPR"/>
    <property type="match status" value="12"/>
</dbReference>
<dbReference type="PANTHER" id="PTHR47938:SF35">
    <property type="entry name" value="PENTATRICOPEPTIDE REPEAT-CONTAINING PROTEIN 4, MITOCHONDRIAL-RELATED"/>
    <property type="match status" value="1"/>
</dbReference>
<dbReference type="PANTHER" id="PTHR47938">
    <property type="entry name" value="RESPIRATORY COMPLEX I CHAPERONE (CIA84), PUTATIVE (AFU_ORTHOLOGUE AFUA_2G06020)-RELATED"/>
    <property type="match status" value="1"/>
</dbReference>
<dbReference type="Pfam" id="PF01535">
    <property type="entry name" value="PPR"/>
    <property type="match status" value="5"/>
</dbReference>
<dbReference type="Pfam" id="PF13041">
    <property type="entry name" value="PPR_2"/>
    <property type="match status" value="4"/>
</dbReference>
<dbReference type="Pfam" id="PF13812">
    <property type="entry name" value="PPR_3"/>
    <property type="match status" value="1"/>
</dbReference>
<dbReference type="PROSITE" id="PS51375">
    <property type="entry name" value="PPR"/>
    <property type="match status" value="16"/>
</dbReference>
<evidence type="ECO:0000255" key="1"/>
<evidence type="ECO:0000305" key="2"/>
<name>PP368_ARATH</name>
<accession>P0C8Q6</accession>
<accession>Q9FTA4</accession>
<protein>
    <recommendedName>
        <fullName>Putative pentatricopeptide repeat-containing protein At5g08310, mitochondrial</fullName>
    </recommendedName>
</protein>
<gene>
    <name type="ordered locus">At5g08310</name>
    <name type="ORF">F8L15_40</name>
</gene>
<reference key="1">
    <citation type="journal article" date="2000" name="Nature">
        <title>Sequence and analysis of chromosome 5 of the plant Arabidopsis thaliana.</title>
        <authorList>
            <person name="Tabata S."/>
            <person name="Kaneko T."/>
            <person name="Nakamura Y."/>
            <person name="Kotani H."/>
            <person name="Kato T."/>
            <person name="Asamizu E."/>
            <person name="Miyajima N."/>
            <person name="Sasamoto S."/>
            <person name="Kimura T."/>
            <person name="Hosouchi T."/>
            <person name="Kawashima K."/>
            <person name="Kohara M."/>
            <person name="Matsumoto M."/>
            <person name="Matsuno A."/>
            <person name="Muraki A."/>
            <person name="Nakayama S."/>
            <person name="Nakazaki N."/>
            <person name="Naruo K."/>
            <person name="Okumura S."/>
            <person name="Shinpo S."/>
            <person name="Takeuchi C."/>
            <person name="Wada T."/>
            <person name="Watanabe A."/>
            <person name="Yamada M."/>
            <person name="Yasuda M."/>
            <person name="Sato S."/>
            <person name="de la Bastide M."/>
            <person name="Huang E."/>
            <person name="Spiegel L."/>
            <person name="Gnoj L."/>
            <person name="O'Shaughnessy A."/>
            <person name="Preston R."/>
            <person name="Habermann K."/>
            <person name="Murray J."/>
            <person name="Johnson D."/>
            <person name="Rohlfing T."/>
            <person name="Nelson J."/>
            <person name="Stoneking T."/>
            <person name="Pepin K."/>
            <person name="Spieth J."/>
            <person name="Sekhon M."/>
            <person name="Armstrong J."/>
            <person name="Becker M."/>
            <person name="Belter E."/>
            <person name="Cordum H."/>
            <person name="Cordes M."/>
            <person name="Courtney L."/>
            <person name="Courtney W."/>
            <person name="Dante M."/>
            <person name="Du H."/>
            <person name="Edwards J."/>
            <person name="Fryman J."/>
            <person name="Haakensen B."/>
            <person name="Lamar E."/>
            <person name="Latreille P."/>
            <person name="Leonard S."/>
            <person name="Meyer R."/>
            <person name="Mulvaney E."/>
            <person name="Ozersky P."/>
            <person name="Riley A."/>
            <person name="Strowmatt C."/>
            <person name="Wagner-McPherson C."/>
            <person name="Wollam A."/>
            <person name="Yoakum M."/>
            <person name="Bell M."/>
            <person name="Dedhia N."/>
            <person name="Parnell L."/>
            <person name="Shah R."/>
            <person name="Rodriguez M."/>
            <person name="Hoon See L."/>
            <person name="Vil D."/>
            <person name="Baker J."/>
            <person name="Kirchoff K."/>
            <person name="Toth K."/>
            <person name="King L."/>
            <person name="Bahret A."/>
            <person name="Miller B."/>
            <person name="Marra M.A."/>
            <person name="Martienssen R."/>
            <person name="McCombie W.R."/>
            <person name="Wilson R.K."/>
            <person name="Murphy G."/>
            <person name="Bancroft I."/>
            <person name="Volckaert G."/>
            <person name="Wambutt R."/>
            <person name="Duesterhoeft A."/>
            <person name="Stiekema W."/>
            <person name="Pohl T."/>
            <person name="Entian K.-D."/>
            <person name="Terryn N."/>
            <person name="Hartley N."/>
            <person name="Bent E."/>
            <person name="Johnson S."/>
            <person name="Langham S.-A."/>
            <person name="McCullagh B."/>
            <person name="Robben J."/>
            <person name="Grymonprez B."/>
            <person name="Zimmermann W."/>
            <person name="Ramsperger U."/>
            <person name="Wedler H."/>
            <person name="Balke K."/>
            <person name="Wedler E."/>
            <person name="Peters S."/>
            <person name="van Staveren M."/>
            <person name="Dirkse W."/>
            <person name="Mooijman P."/>
            <person name="Klein Lankhorst R."/>
            <person name="Weitzenegger T."/>
            <person name="Bothe G."/>
            <person name="Rose M."/>
            <person name="Hauf J."/>
            <person name="Berneiser S."/>
            <person name="Hempel S."/>
            <person name="Feldpausch M."/>
            <person name="Lamberth S."/>
            <person name="Villarroel R."/>
            <person name="Gielen J."/>
            <person name="Ardiles W."/>
            <person name="Bents O."/>
            <person name="Lemcke K."/>
            <person name="Kolesov G."/>
            <person name="Mayer K.F.X."/>
            <person name="Rudd S."/>
            <person name="Schoof H."/>
            <person name="Schueller C."/>
            <person name="Zaccaria P."/>
            <person name="Mewes H.-W."/>
            <person name="Bevan M."/>
            <person name="Fransz P.F."/>
        </authorList>
    </citation>
    <scope>NUCLEOTIDE SEQUENCE [LARGE SCALE GENOMIC DNA]</scope>
    <source>
        <strain>cv. Columbia</strain>
    </source>
</reference>
<reference key="2">
    <citation type="journal article" date="2017" name="Plant J.">
        <title>Araport11: a complete reannotation of the Arabidopsis thaliana reference genome.</title>
        <authorList>
            <person name="Cheng C.Y."/>
            <person name="Krishnakumar V."/>
            <person name="Chan A.P."/>
            <person name="Thibaud-Nissen F."/>
            <person name="Schobel S."/>
            <person name="Town C.D."/>
        </authorList>
    </citation>
    <scope>GENOME REANNOTATION</scope>
    <source>
        <strain>cv. Columbia</strain>
    </source>
</reference>
<reference key="3">
    <citation type="journal article" date="2004" name="Plant Cell">
        <title>Genome-wide analysis of Arabidopsis pentatricopeptide repeat proteins reveals their essential role in organelle biogenesis.</title>
        <authorList>
            <person name="Lurin C."/>
            <person name="Andres C."/>
            <person name="Aubourg S."/>
            <person name="Bellaoui M."/>
            <person name="Bitton F."/>
            <person name="Bruyere C."/>
            <person name="Caboche M."/>
            <person name="Debast C."/>
            <person name="Gualberto J."/>
            <person name="Hoffmann B."/>
            <person name="Lecharny A."/>
            <person name="Le Ret M."/>
            <person name="Martin-Magniette M.-L."/>
            <person name="Mireau H."/>
            <person name="Peeters N."/>
            <person name="Renou J.-P."/>
            <person name="Szurek B."/>
            <person name="Taconnat L."/>
            <person name="Small I."/>
        </authorList>
    </citation>
    <scope>GENE FAMILY</scope>
</reference>
<keyword id="KW-0496">Mitochondrion</keyword>
<keyword id="KW-1185">Reference proteome</keyword>
<keyword id="KW-0677">Repeat</keyword>
<keyword id="KW-0809">Transit peptide</keyword>